<sequence>MVTLDGSSLTTADVARVLFDFEEAAASEESMERVKKSRAAVERIVRDEKTIYGINTGFGKFSDVLIQKEDSAALQLNLILSHACGVGDPFPECVSRAMLLLRANALLKGFSGVRAELIEQLLAFLNKRVHPVIPQQGSLGASGDLAPLSHLALALIGQGEVFFEGERMPAMTGLKKAGIQPVTLTSKEGLALINGTQAMTAMGVVAYIEAEKLAYQTERIASLTIEGLQGIIDAFDEDIHLARGYQEQIDVAERIRFYLSDSGLTTSQGELRVQDAYSLRCIPQVHGATWQTLGYVKEKLEIEMNAATDNPLIFNDGDKVISGGNFHGQPIAFAMDFLKIAISELANIAERRIERLVNPQLNDLPPFLSPHPGLQSGAMIMQYAAASLVSENKTLAHPASVDSIPSSANQEDHVSMGTIAARHAYQVIANTRRVIAIEAICALQAVEYRGIEHAASYTKQLFQEMRKVVPSIQQDRVFSYDIERLTDWLKKESLIPDHQNKELRGMNI</sequence>
<reference key="1">
    <citation type="journal article" date="1988" name="J. Bacteriol.">
        <title>Cloning and nucleotide sequences of histidase and regulatory genes in the Bacillus subtilis hut operon and positive regulation of the operon.</title>
        <authorList>
            <person name="Oda M."/>
            <person name="Sugishita A."/>
            <person name="Furukawa K."/>
        </authorList>
    </citation>
    <scope>NUCLEOTIDE SEQUENCE [GENOMIC DNA]</scope>
</reference>
<reference key="2">
    <citation type="journal article" date="1995" name="Microbiology">
        <title>Cloning and sequencing of a 29 kb region of the Bacillus subtilis genome containing the hut and wapA loci.</title>
        <authorList>
            <person name="Yoshida K."/>
            <person name="Sano H."/>
            <person name="Seki S."/>
            <person name="Oda M."/>
            <person name="Fujimura M."/>
            <person name="Fujita Y."/>
        </authorList>
    </citation>
    <scope>NUCLEOTIDE SEQUENCE [GENOMIC DNA]</scope>
    <source>
        <strain>168 / BGSC1A1</strain>
    </source>
</reference>
<reference key="3">
    <citation type="journal article" date="1997" name="Nature">
        <title>The complete genome sequence of the Gram-positive bacterium Bacillus subtilis.</title>
        <authorList>
            <person name="Kunst F."/>
            <person name="Ogasawara N."/>
            <person name="Moszer I."/>
            <person name="Albertini A.M."/>
            <person name="Alloni G."/>
            <person name="Azevedo V."/>
            <person name="Bertero M.G."/>
            <person name="Bessieres P."/>
            <person name="Bolotin A."/>
            <person name="Borchert S."/>
            <person name="Borriss R."/>
            <person name="Boursier L."/>
            <person name="Brans A."/>
            <person name="Braun M."/>
            <person name="Brignell S.C."/>
            <person name="Bron S."/>
            <person name="Brouillet S."/>
            <person name="Bruschi C.V."/>
            <person name="Caldwell B."/>
            <person name="Capuano V."/>
            <person name="Carter N.M."/>
            <person name="Choi S.-K."/>
            <person name="Codani J.-J."/>
            <person name="Connerton I.F."/>
            <person name="Cummings N.J."/>
            <person name="Daniel R.A."/>
            <person name="Denizot F."/>
            <person name="Devine K.M."/>
            <person name="Duesterhoeft A."/>
            <person name="Ehrlich S.D."/>
            <person name="Emmerson P.T."/>
            <person name="Entian K.-D."/>
            <person name="Errington J."/>
            <person name="Fabret C."/>
            <person name="Ferrari E."/>
            <person name="Foulger D."/>
            <person name="Fritz C."/>
            <person name="Fujita M."/>
            <person name="Fujita Y."/>
            <person name="Fuma S."/>
            <person name="Galizzi A."/>
            <person name="Galleron N."/>
            <person name="Ghim S.-Y."/>
            <person name="Glaser P."/>
            <person name="Goffeau A."/>
            <person name="Golightly E.J."/>
            <person name="Grandi G."/>
            <person name="Guiseppi G."/>
            <person name="Guy B.J."/>
            <person name="Haga K."/>
            <person name="Haiech J."/>
            <person name="Harwood C.R."/>
            <person name="Henaut A."/>
            <person name="Hilbert H."/>
            <person name="Holsappel S."/>
            <person name="Hosono S."/>
            <person name="Hullo M.-F."/>
            <person name="Itaya M."/>
            <person name="Jones L.-M."/>
            <person name="Joris B."/>
            <person name="Karamata D."/>
            <person name="Kasahara Y."/>
            <person name="Klaerr-Blanchard M."/>
            <person name="Klein C."/>
            <person name="Kobayashi Y."/>
            <person name="Koetter P."/>
            <person name="Koningstein G."/>
            <person name="Krogh S."/>
            <person name="Kumano M."/>
            <person name="Kurita K."/>
            <person name="Lapidus A."/>
            <person name="Lardinois S."/>
            <person name="Lauber J."/>
            <person name="Lazarevic V."/>
            <person name="Lee S.-M."/>
            <person name="Levine A."/>
            <person name="Liu H."/>
            <person name="Masuda S."/>
            <person name="Mauel C."/>
            <person name="Medigue C."/>
            <person name="Medina N."/>
            <person name="Mellado R.P."/>
            <person name="Mizuno M."/>
            <person name="Moestl D."/>
            <person name="Nakai S."/>
            <person name="Noback M."/>
            <person name="Noone D."/>
            <person name="O'Reilly M."/>
            <person name="Ogawa K."/>
            <person name="Ogiwara A."/>
            <person name="Oudega B."/>
            <person name="Park S.-H."/>
            <person name="Parro V."/>
            <person name="Pohl T.M."/>
            <person name="Portetelle D."/>
            <person name="Porwollik S."/>
            <person name="Prescott A.M."/>
            <person name="Presecan E."/>
            <person name="Pujic P."/>
            <person name="Purnelle B."/>
            <person name="Rapoport G."/>
            <person name="Rey M."/>
            <person name="Reynolds S."/>
            <person name="Rieger M."/>
            <person name="Rivolta C."/>
            <person name="Rocha E."/>
            <person name="Roche B."/>
            <person name="Rose M."/>
            <person name="Sadaie Y."/>
            <person name="Sato T."/>
            <person name="Scanlan E."/>
            <person name="Schleich S."/>
            <person name="Schroeter R."/>
            <person name="Scoffone F."/>
            <person name="Sekiguchi J."/>
            <person name="Sekowska A."/>
            <person name="Seror S.J."/>
            <person name="Serror P."/>
            <person name="Shin B.-S."/>
            <person name="Soldo B."/>
            <person name="Sorokin A."/>
            <person name="Tacconi E."/>
            <person name="Takagi T."/>
            <person name="Takahashi H."/>
            <person name="Takemaru K."/>
            <person name="Takeuchi M."/>
            <person name="Tamakoshi A."/>
            <person name="Tanaka T."/>
            <person name="Terpstra P."/>
            <person name="Tognoni A."/>
            <person name="Tosato V."/>
            <person name="Uchiyama S."/>
            <person name="Vandenbol M."/>
            <person name="Vannier F."/>
            <person name="Vassarotti A."/>
            <person name="Viari A."/>
            <person name="Wambutt R."/>
            <person name="Wedler E."/>
            <person name="Wedler H."/>
            <person name="Weitzenegger T."/>
            <person name="Winters P."/>
            <person name="Wipat A."/>
            <person name="Yamamoto H."/>
            <person name="Yamane K."/>
            <person name="Yasumoto K."/>
            <person name="Yata K."/>
            <person name="Yoshida K."/>
            <person name="Yoshikawa H.-F."/>
            <person name="Zumstein E."/>
            <person name="Yoshikawa H."/>
            <person name="Danchin A."/>
        </authorList>
    </citation>
    <scope>NUCLEOTIDE SEQUENCE [LARGE SCALE GENOMIC DNA]</scope>
    <source>
        <strain>168</strain>
    </source>
</reference>
<accession>P10944</accession>
<gene>
    <name type="primary">hutH</name>
    <name type="ordered locus">BSU39350</name>
</gene>
<evidence type="ECO:0000250" key="1"/>
<evidence type="ECO:0000305" key="2"/>
<keyword id="KW-0963">Cytoplasm</keyword>
<keyword id="KW-0369">Histidine metabolism</keyword>
<keyword id="KW-0456">Lyase</keyword>
<keyword id="KW-1185">Reference proteome</keyword>
<name>HUTH_BACSU</name>
<feature type="chain" id="PRO_0000160991" description="Histidine ammonia-lyase">
    <location>
        <begin position="1"/>
        <end position="508"/>
    </location>
</feature>
<feature type="modified residue" description="2,3-didehydroalanine (Ser)" evidence="1">
    <location>
        <position position="142"/>
    </location>
</feature>
<feature type="cross-link" description="5-imidazolinone (Ala-Gly)" evidence="1">
    <location>
        <begin position="141"/>
        <end position="143"/>
    </location>
</feature>
<proteinExistence type="evidence at transcript level"/>
<protein>
    <recommendedName>
        <fullName>Histidine ammonia-lyase</fullName>
        <shortName>Histidase</shortName>
        <ecNumber>4.3.1.3</ecNumber>
    </recommendedName>
</protein>
<dbReference type="EC" id="4.3.1.3"/>
<dbReference type="EMBL" id="M20659">
    <property type="protein sequence ID" value="AAA22538.1"/>
    <property type="molecule type" value="Genomic_DNA"/>
</dbReference>
<dbReference type="EMBL" id="D31856">
    <property type="protein sequence ID" value="BAA06644.1"/>
    <property type="molecule type" value="Genomic_DNA"/>
</dbReference>
<dbReference type="EMBL" id="AL009126">
    <property type="protein sequence ID" value="CAB15971.1"/>
    <property type="molecule type" value="Genomic_DNA"/>
</dbReference>
<dbReference type="PIR" id="S18810">
    <property type="entry name" value="UFBSHS"/>
</dbReference>
<dbReference type="RefSeq" id="NP_391814.1">
    <property type="nucleotide sequence ID" value="NC_000964.3"/>
</dbReference>
<dbReference type="RefSeq" id="WP_003243255.1">
    <property type="nucleotide sequence ID" value="NZ_OZ025638.1"/>
</dbReference>
<dbReference type="SMR" id="P10944"/>
<dbReference type="FunCoup" id="P10944">
    <property type="interactions" value="108"/>
</dbReference>
<dbReference type="STRING" id="224308.BSU39350"/>
<dbReference type="PaxDb" id="224308-BSU39350"/>
<dbReference type="EnsemblBacteria" id="CAB15971">
    <property type="protein sequence ID" value="CAB15971"/>
    <property type="gene ID" value="BSU_39350"/>
</dbReference>
<dbReference type="GeneID" id="937541"/>
<dbReference type="KEGG" id="bsu:BSU39350"/>
<dbReference type="PATRIC" id="fig|224308.179.peg.4260"/>
<dbReference type="eggNOG" id="COG2986">
    <property type="taxonomic scope" value="Bacteria"/>
</dbReference>
<dbReference type="InParanoid" id="P10944"/>
<dbReference type="OrthoDB" id="9806955at2"/>
<dbReference type="PhylomeDB" id="P10944"/>
<dbReference type="BioCyc" id="BSUB:BSU39350-MONOMER"/>
<dbReference type="BioCyc" id="MetaCyc:MONOMER-11609"/>
<dbReference type="UniPathway" id="UPA00379">
    <property type="reaction ID" value="UER00549"/>
</dbReference>
<dbReference type="Proteomes" id="UP000001570">
    <property type="component" value="Chromosome"/>
</dbReference>
<dbReference type="GO" id="GO:0005737">
    <property type="term" value="C:cytoplasm"/>
    <property type="evidence" value="ECO:0007669"/>
    <property type="project" value="UniProtKB-SubCell"/>
</dbReference>
<dbReference type="GO" id="GO:0004397">
    <property type="term" value="F:histidine ammonia-lyase activity"/>
    <property type="evidence" value="ECO:0000318"/>
    <property type="project" value="GO_Central"/>
</dbReference>
<dbReference type="GO" id="GO:0006548">
    <property type="term" value="P:L-histidine catabolic process"/>
    <property type="evidence" value="ECO:0000318"/>
    <property type="project" value="GO_Central"/>
</dbReference>
<dbReference type="GO" id="GO:0019556">
    <property type="term" value="P:L-histidine catabolic process to glutamate and formamide"/>
    <property type="evidence" value="ECO:0007669"/>
    <property type="project" value="UniProtKB-UniPathway"/>
</dbReference>
<dbReference type="GO" id="GO:0019557">
    <property type="term" value="P:L-histidine catabolic process to glutamate and formate"/>
    <property type="evidence" value="ECO:0007669"/>
    <property type="project" value="UniProtKB-UniPathway"/>
</dbReference>
<dbReference type="CDD" id="cd00332">
    <property type="entry name" value="PAL-HAL"/>
    <property type="match status" value="1"/>
</dbReference>
<dbReference type="FunFam" id="1.10.275.10:FF:000008">
    <property type="entry name" value="Histidine ammonia-lyase"/>
    <property type="match status" value="1"/>
</dbReference>
<dbReference type="FunFam" id="1.20.200.10:FF:000003">
    <property type="entry name" value="Histidine ammonia-lyase"/>
    <property type="match status" value="1"/>
</dbReference>
<dbReference type="Gene3D" id="1.20.200.10">
    <property type="entry name" value="Fumarase/aspartase (Central domain)"/>
    <property type="match status" value="1"/>
</dbReference>
<dbReference type="Gene3D" id="1.10.275.10">
    <property type="entry name" value="Fumarase/aspartase (N-terminal domain)"/>
    <property type="match status" value="1"/>
</dbReference>
<dbReference type="HAMAP" id="MF_00229">
    <property type="entry name" value="His_ammonia_lyase"/>
    <property type="match status" value="1"/>
</dbReference>
<dbReference type="InterPro" id="IPR001106">
    <property type="entry name" value="Aromatic_Lyase"/>
</dbReference>
<dbReference type="InterPro" id="IPR024083">
    <property type="entry name" value="Fumarase/histidase_N"/>
</dbReference>
<dbReference type="InterPro" id="IPR005921">
    <property type="entry name" value="HutH"/>
</dbReference>
<dbReference type="InterPro" id="IPR008948">
    <property type="entry name" value="L-Aspartase-like"/>
</dbReference>
<dbReference type="InterPro" id="IPR022313">
    <property type="entry name" value="Phe/His_NH3-lyase_AS"/>
</dbReference>
<dbReference type="NCBIfam" id="TIGR01225">
    <property type="entry name" value="hutH"/>
    <property type="match status" value="1"/>
</dbReference>
<dbReference type="NCBIfam" id="NF006871">
    <property type="entry name" value="PRK09367.1"/>
    <property type="match status" value="1"/>
</dbReference>
<dbReference type="PANTHER" id="PTHR10362">
    <property type="entry name" value="HISTIDINE AMMONIA-LYASE"/>
    <property type="match status" value="1"/>
</dbReference>
<dbReference type="Pfam" id="PF00221">
    <property type="entry name" value="Lyase_aromatic"/>
    <property type="match status" value="1"/>
</dbReference>
<dbReference type="SUPFAM" id="SSF48557">
    <property type="entry name" value="L-aspartase-like"/>
    <property type="match status" value="1"/>
</dbReference>
<dbReference type="PROSITE" id="PS00488">
    <property type="entry name" value="PAL_HISTIDASE"/>
    <property type="match status" value="1"/>
</dbReference>
<comment type="catalytic activity">
    <reaction>
        <text>L-histidine = trans-urocanate + NH4(+)</text>
        <dbReference type="Rhea" id="RHEA:21232"/>
        <dbReference type="ChEBI" id="CHEBI:17771"/>
        <dbReference type="ChEBI" id="CHEBI:28938"/>
        <dbReference type="ChEBI" id="CHEBI:57595"/>
        <dbReference type="EC" id="4.3.1.3"/>
    </reaction>
</comment>
<comment type="pathway">
    <text>Amino-acid degradation; L-histidine degradation into L-glutamate; N-formimidoyl-L-glutamate from L-histidine: step 1/3.</text>
</comment>
<comment type="subcellular location">
    <subcellularLocation>
        <location evidence="2">Cytoplasm</location>
    </subcellularLocation>
</comment>
<comment type="induction">
    <text>By histidine.</text>
</comment>
<comment type="PTM">
    <text evidence="1">Contains an active site 4-methylidene-imidazol-5-one (MIO), which is formed autocatalytically by cyclization and dehydration of residues Ala-Ser-Gly.</text>
</comment>
<comment type="similarity">
    <text evidence="2">Belongs to the PAL/histidase family.</text>
</comment>
<organism>
    <name type="scientific">Bacillus subtilis (strain 168)</name>
    <dbReference type="NCBI Taxonomy" id="224308"/>
    <lineage>
        <taxon>Bacteria</taxon>
        <taxon>Bacillati</taxon>
        <taxon>Bacillota</taxon>
        <taxon>Bacilli</taxon>
        <taxon>Bacillales</taxon>
        <taxon>Bacillaceae</taxon>
        <taxon>Bacillus</taxon>
    </lineage>
</organism>